<proteinExistence type="inferred from homology"/>
<feature type="chain" id="PRO_0000346040" description="Protoheme IX farnesyltransferase">
    <location>
        <begin position="1"/>
        <end position="282"/>
    </location>
</feature>
<feature type="transmembrane region" description="Helical" evidence="1">
    <location>
        <begin position="13"/>
        <end position="33"/>
    </location>
</feature>
<feature type="transmembrane region" description="Helical" evidence="1">
    <location>
        <begin position="36"/>
        <end position="56"/>
    </location>
</feature>
<feature type="transmembrane region" description="Helical" evidence="1">
    <location>
        <begin position="74"/>
        <end position="96"/>
    </location>
</feature>
<feature type="transmembrane region" description="Helical" evidence="1">
    <location>
        <begin position="101"/>
        <end position="120"/>
    </location>
</feature>
<feature type="transmembrane region" description="Helical" evidence="1">
    <location>
        <begin position="129"/>
        <end position="149"/>
    </location>
</feature>
<feature type="transmembrane region" description="Helical" evidence="1">
    <location>
        <begin position="156"/>
        <end position="176"/>
    </location>
</feature>
<feature type="transmembrane region" description="Helical" evidence="1">
    <location>
        <begin position="207"/>
        <end position="227"/>
    </location>
</feature>
<feature type="transmembrane region" description="Helical" evidence="1">
    <location>
        <begin position="232"/>
        <end position="252"/>
    </location>
</feature>
<feature type="transmembrane region" description="Helical" evidence="1">
    <location>
        <begin position="261"/>
        <end position="281"/>
    </location>
</feature>
<protein>
    <recommendedName>
        <fullName evidence="1">Protoheme IX farnesyltransferase</fullName>
        <ecNumber evidence="1">2.5.1.141</ecNumber>
    </recommendedName>
    <alternativeName>
        <fullName evidence="1">Heme B farnesyltransferase</fullName>
    </alternativeName>
    <alternativeName>
        <fullName evidence="1">Heme O synthase</fullName>
    </alternativeName>
</protein>
<reference key="1">
    <citation type="journal article" date="2011" name="J. Bacteriol.">
        <title>Complete genome sequence and updated annotation of Desulfovibrio alaskensis G20.</title>
        <authorList>
            <person name="Hauser L.J."/>
            <person name="Land M.L."/>
            <person name="Brown S.D."/>
            <person name="Larimer F."/>
            <person name="Keller K.L."/>
            <person name="Rapp-Giles B.J."/>
            <person name="Price M.N."/>
            <person name="Lin M."/>
            <person name="Bruce D.C."/>
            <person name="Detter J.C."/>
            <person name="Tapia R."/>
            <person name="Han C.S."/>
            <person name="Goodwin L.A."/>
            <person name="Cheng J.F."/>
            <person name="Pitluck S."/>
            <person name="Copeland A."/>
            <person name="Lucas S."/>
            <person name="Nolan M."/>
            <person name="Lapidus A.L."/>
            <person name="Palumbo A.V."/>
            <person name="Wall J.D."/>
        </authorList>
    </citation>
    <scope>NUCLEOTIDE SEQUENCE [LARGE SCALE GENOMIC DNA]</scope>
    <source>
        <strain>ATCC BAA-1058 / DSM 17464 / G20</strain>
    </source>
</reference>
<comment type="function">
    <text evidence="1">Converts heme B (protoheme IX) to heme O by substitution of the vinyl group on carbon 2 of heme B porphyrin ring with a hydroxyethyl farnesyl side group.</text>
</comment>
<comment type="catalytic activity">
    <reaction evidence="1">
        <text>heme b + (2E,6E)-farnesyl diphosphate + H2O = Fe(II)-heme o + diphosphate</text>
        <dbReference type="Rhea" id="RHEA:28070"/>
        <dbReference type="ChEBI" id="CHEBI:15377"/>
        <dbReference type="ChEBI" id="CHEBI:33019"/>
        <dbReference type="ChEBI" id="CHEBI:60344"/>
        <dbReference type="ChEBI" id="CHEBI:60530"/>
        <dbReference type="ChEBI" id="CHEBI:175763"/>
        <dbReference type="EC" id="2.5.1.141"/>
    </reaction>
</comment>
<comment type="pathway">
    <text evidence="1">Porphyrin-containing compound metabolism; heme O biosynthesis; heme O from protoheme: step 1/1.</text>
</comment>
<comment type="subcellular location">
    <subcellularLocation>
        <location evidence="1">Cell inner membrane</location>
        <topology evidence="1">Multi-pass membrane protein</topology>
    </subcellularLocation>
</comment>
<comment type="miscellaneous">
    <text evidence="1">Carbon 2 of the heme B porphyrin ring is defined according to the Fischer nomenclature.</text>
</comment>
<comment type="similarity">
    <text evidence="1">Belongs to the UbiA prenyltransferase family. Protoheme IX farnesyltransferase subfamily.</text>
</comment>
<organism>
    <name type="scientific">Oleidesulfovibrio alaskensis (strain ATCC BAA-1058 / DSM 17464 / G20)</name>
    <name type="common">Desulfovibrio alaskensis</name>
    <dbReference type="NCBI Taxonomy" id="207559"/>
    <lineage>
        <taxon>Bacteria</taxon>
        <taxon>Pseudomonadati</taxon>
        <taxon>Thermodesulfobacteriota</taxon>
        <taxon>Desulfovibrionia</taxon>
        <taxon>Desulfovibrionales</taxon>
        <taxon>Desulfovibrionaceae</taxon>
        <taxon>Oleidesulfovibrio</taxon>
    </lineage>
</organism>
<sequence length="282" mass="30194">MLRAASSLFRFRVAGMVALSCVFGYLLAAGAAGPDMVTSAAGTFLLTCACSVFNQIQEKDLDARMPRTRNRPVASGRLPTTAARAVGMAALLPALILLHAAGGVRLVLLSAAVLALYNGVYTPMKKYTAFSLLAGAVPGALPPVFGWLAAGGNLYSPEIALLFIVYYLWQVPHFWLRAERDRQSYLAAGLPLPSVELPHRYHALLRLWYASYMVALLLLPVFPFIAETAVRIAVCLAGITGLAASGYLLASPVRGFHAVNVSMLFVMLLLVVDRLVTSGIIT</sequence>
<gene>
    <name evidence="1" type="primary">ctaB</name>
    <name type="ordered locus">Dde_1827</name>
</gene>
<dbReference type="EC" id="2.5.1.141" evidence="1"/>
<dbReference type="EMBL" id="CP000112">
    <property type="protein sequence ID" value="ABB38624.1"/>
    <property type="molecule type" value="Genomic_DNA"/>
</dbReference>
<dbReference type="RefSeq" id="WP_011367751.1">
    <property type="nucleotide sequence ID" value="NC_007519.1"/>
</dbReference>
<dbReference type="SMR" id="Q310M2"/>
<dbReference type="STRING" id="207559.Dde_1827"/>
<dbReference type="KEGG" id="dde:Dde_1827"/>
<dbReference type="eggNOG" id="COG0109">
    <property type="taxonomic scope" value="Bacteria"/>
</dbReference>
<dbReference type="HOGENOM" id="CLU_029631_3_1_7"/>
<dbReference type="UniPathway" id="UPA00834">
    <property type="reaction ID" value="UER00712"/>
</dbReference>
<dbReference type="Proteomes" id="UP000002710">
    <property type="component" value="Chromosome"/>
</dbReference>
<dbReference type="GO" id="GO:0005886">
    <property type="term" value="C:plasma membrane"/>
    <property type="evidence" value="ECO:0007669"/>
    <property type="project" value="UniProtKB-SubCell"/>
</dbReference>
<dbReference type="GO" id="GO:0008495">
    <property type="term" value="F:protoheme IX farnesyltransferase activity"/>
    <property type="evidence" value="ECO:0007669"/>
    <property type="project" value="UniProtKB-UniRule"/>
</dbReference>
<dbReference type="GO" id="GO:0048034">
    <property type="term" value="P:heme O biosynthetic process"/>
    <property type="evidence" value="ECO:0007669"/>
    <property type="project" value="UniProtKB-UniRule"/>
</dbReference>
<dbReference type="CDD" id="cd13957">
    <property type="entry name" value="PT_UbiA_Cox10"/>
    <property type="match status" value="1"/>
</dbReference>
<dbReference type="Gene3D" id="1.10.357.140">
    <property type="entry name" value="UbiA prenyltransferase"/>
    <property type="match status" value="1"/>
</dbReference>
<dbReference type="HAMAP" id="MF_00154">
    <property type="entry name" value="CyoE_CtaB"/>
    <property type="match status" value="1"/>
</dbReference>
<dbReference type="InterPro" id="IPR006369">
    <property type="entry name" value="Protohaem_IX_farnesylTrfase"/>
</dbReference>
<dbReference type="InterPro" id="IPR000537">
    <property type="entry name" value="UbiA_prenyltransferase"/>
</dbReference>
<dbReference type="InterPro" id="IPR030470">
    <property type="entry name" value="UbiA_prenylTrfase_CS"/>
</dbReference>
<dbReference type="InterPro" id="IPR044878">
    <property type="entry name" value="UbiA_sf"/>
</dbReference>
<dbReference type="PANTHER" id="PTHR43448">
    <property type="entry name" value="PROTOHEME IX FARNESYLTRANSFERASE, MITOCHONDRIAL"/>
    <property type="match status" value="1"/>
</dbReference>
<dbReference type="PANTHER" id="PTHR43448:SF2">
    <property type="entry name" value="PROTOHEME IX FARNESYLTRANSFERASE, MITOCHONDRIAL"/>
    <property type="match status" value="1"/>
</dbReference>
<dbReference type="Pfam" id="PF01040">
    <property type="entry name" value="UbiA"/>
    <property type="match status" value="1"/>
</dbReference>
<dbReference type="PROSITE" id="PS00943">
    <property type="entry name" value="UBIA"/>
    <property type="match status" value="1"/>
</dbReference>
<keyword id="KW-0997">Cell inner membrane</keyword>
<keyword id="KW-1003">Cell membrane</keyword>
<keyword id="KW-0350">Heme biosynthesis</keyword>
<keyword id="KW-0472">Membrane</keyword>
<keyword id="KW-1185">Reference proteome</keyword>
<keyword id="KW-0808">Transferase</keyword>
<keyword id="KW-0812">Transmembrane</keyword>
<keyword id="KW-1133">Transmembrane helix</keyword>
<evidence type="ECO:0000255" key="1">
    <source>
        <dbReference type="HAMAP-Rule" id="MF_00154"/>
    </source>
</evidence>
<name>COXX_OLEA2</name>
<accession>Q310M2</accession>